<protein>
    <recommendedName>
        <fullName>Serine/threonine-protein phosphatase 2A activator 1</fullName>
        <ecNumber>5.2.1.8</ecNumber>
    </recommendedName>
    <alternativeName>
        <fullName>Peptidyl-prolyl cis-trans isomerase PTPA-1</fullName>
        <shortName>PPIase PTPA-1</shortName>
        <shortName>Rotamase PTPA-1</shortName>
    </alternativeName>
    <alternativeName>
        <fullName>Phosphotyrosyl phosphatase activator 1</fullName>
    </alternativeName>
</protein>
<accession>Q6CYH1</accession>
<dbReference type="EC" id="5.2.1.8"/>
<dbReference type="EMBL" id="CR382121">
    <property type="protein sequence ID" value="CAH02606.1"/>
    <property type="molecule type" value="Genomic_DNA"/>
</dbReference>
<dbReference type="RefSeq" id="XP_451018.1">
    <property type="nucleotide sequence ID" value="XM_451018.1"/>
</dbReference>
<dbReference type="SMR" id="Q6CYH1"/>
<dbReference type="FunCoup" id="Q6CYH1">
    <property type="interactions" value="116"/>
</dbReference>
<dbReference type="STRING" id="284590.Q6CYH1"/>
<dbReference type="PaxDb" id="284590-Q6CYH1"/>
<dbReference type="KEGG" id="kla:KLLA0_A00462g"/>
<dbReference type="eggNOG" id="KOG2867">
    <property type="taxonomic scope" value="Eukaryota"/>
</dbReference>
<dbReference type="HOGENOM" id="CLU_030733_2_1_1"/>
<dbReference type="InParanoid" id="Q6CYH1"/>
<dbReference type="OMA" id="ACRDWHA"/>
<dbReference type="Proteomes" id="UP000000598">
    <property type="component" value="Chromosome A"/>
</dbReference>
<dbReference type="GO" id="GO:0005737">
    <property type="term" value="C:cytoplasm"/>
    <property type="evidence" value="ECO:0007669"/>
    <property type="project" value="UniProtKB-SubCell"/>
</dbReference>
<dbReference type="GO" id="GO:0005634">
    <property type="term" value="C:nucleus"/>
    <property type="evidence" value="ECO:0007669"/>
    <property type="project" value="UniProtKB-SubCell"/>
</dbReference>
<dbReference type="GO" id="GO:0000159">
    <property type="term" value="C:protein phosphatase type 2A complex"/>
    <property type="evidence" value="ECO:0007669"/>
    <property type="project" value="TreeGrafter"/>
</dbReference>
<dbReference type="GO" id="GO:0003755">
    <property type="term" value="F:peptidyl-prolyl cis-trans isomerase activity"/>
    <property type="evidence" value="ECO:0007669"/>
    <property type="project" value="UniProtKB-KW"/>
</dbReference>
<dbReference type="GO" id="GO:0008160">
    <property type="term" value="F:protein tyrosine phosphatase activator activity"/>
    <property type="evidence" value="ECO:0007669"/>
    <property type="project" value="TreeGrafter"/>
</dbReference>
<dbReference type="GO" id="GO:0007052">
    <property type="term" value="P:mitotic spindle organization"/>
    <property type="evidence" value="ECO:0007669"/>
    <property type="project" value="TreeGrafter"/>
</dbReference>
<dbReference type="CDD" id="cd04087">
    <property type="entry name" value="PTPA"/>
    <property type="match status" value="1"/>
</dbReference>
<dbReference type="Gene3D" id="1.20.120.1150">
    <property type="match status" value="1"/>
</dbReference>
<dbReference type="InterPro" id="IPR004327">
    <property type="entry name" value="Phstyr_phstse_ac"/>
</dbReference>
<dbReference type="InterPro" id="IPR043170">
    <property type="entry name" value="PTPA_C_lid"/>
</dbReference>
<dbReference type="InterPro" id="IPR037218">
    <property type="entry name" value="PTPA_sf"/>
</dbReference>
<dbReference type="PANTHER" id="PTHR10012">
    <property type="entry name" value="SERINE/THREONINE-PROTEIN PHOSPHATASE 2A REGULATORY SUBUNIT B"/>
    <property type="match status" value="1"/>
</dbReference>
<dbReference type="PANTHER" id="PTHR10012:SF3">
    <property type="entry name" value="SERINE_THREONINE-PROTEIN PHOSPHATASE 2A ACTIVATOR 1"/>
    <property type="match status" value="1"/>
</dbReference>
<dbReference type="Pfam" id="PF03095">
    <property type="entry name" value="PTPA"/>
    <property type="match status" value="1"/>
</dbReference>
<dbReference type="PIRSF" id="PIRSF016325">
    <property type="entry name" value="Phstyr_phstse_ac"/>
    <property type="match status" value="1"/>
</dbReference>
<dbReference type="SUPFAM" id="SSF140984">
    <property type="entry name" value="PTPA-like"/>
    <property type="match status" value="1"/>
</dbReference>
<evidence type="ECO:0000250" key="1"/>
<evidence type="ECO:0000256" key="2">
    <source>
        <dbReference type="SAM" id="MobiDB-lite"/>
    </source>
</evidence>
<evidence type="ECO:0000305" key="3"/>
<name>PTPA1_KLULA</name>
<comment type="function">
    <text evidence="1">PPIases accelerate the folding of proteins. It catalyzes the cis-trans isomerization of proline imidic peptide bonds in oligopeptides. Acts as a regulatory subunit for PP2A-like phosphatases modulating their activity or substrate specificity, probably by inducing a conformational change in the catalytic subunit, a direct target of the PPIase. Can reactivate inactive phosphatase PP2A-phosphatase methylesterase complexes (PP2Ai) in presence of ATP and Mg(2+) by dissociating the inactive form from the complex (By similarity).</text>
</comment>
<comment type="catalytic activity">
    <reaction>
        <text>[protein]-peptidylproline (omega=180) = [protein]-peptidylproline (omega=0)</text>
        <dbReference type="Rhea" id="RHEA:16237"/>
        <dbReference type="Rhea" id="RHEA-COMP:10747"/>
        <dbReference type="Rhea" id="RHEA-COMP:10748"/>
        <dbReference type="ChEBI" id="CHEBI:83833"/>
        <dbReference type="ChEBI" id="CHEBI:83834"/>
        <dbReference type="EC" id="5.2.1.8"/>
    </reaction>
</comment>
<comment type="subcellular location">
    <subcellularLocation>
        <location evidence="1">Cytoplasm</location>
    </subcellularLocation>
    <subcellularLocation>
        <location evidence="1">Nucleus</location>
    </subcellularLocation>
</comment>
<comment type="similarity">
    <text evidence="3">Belongs to the PTPA-type PPIase family.</text>
</comment>
<organism>
    <name type="scientific">Kluyveromyces lactis (strain ATCC 8585 / CBS 2359 / DSM 70799 / NBRC 1267 / NRRL Y-1140 / WM37)</name>
    <name type="common">Yeast</name>
    <name type="synonym">Candida sphaerica</name>
    <dbReference type="NCBI Taxonomy" id="284590"/>
    <lineage>
        <taxon>Eukaryota</taxon>
        <taxon>Fungi</taxon>
        <taxon>Dikarya</taxon>
        <taxon>Ascomycota</taxon>
        <taxon>Saccharomycotina</taxon>
        <taxon>Saccharomycetes</taxon>
        <taxon>Saccharomycetales</taxon>
        <taxon>Saccharomycetaceae</taxon>
        <taxon>Kluyveromyces</taxon>
    </lineage>
</organism>
<sequence>MDFDYENAKFSMPEKRIFDSQGTLDFQNSVAMVRIQYHLQKYITLCKGQQIPDTIKESFFTNIVVELLKRLSALIDETPPERMHSRYGNLSYRDWQTKFQNQLENWLHELLPEKYNNSIIELSYYISNAFGSKERIDYGTGHELSFLAVIICLDMLKIETIKGPALLYCFNSYYDVIQKLILTYKLEPAGSHGVWGLDDHFHFSYILGATQLLDVNTSLIPKDISNTRLMEQNSSSNLFCKSIRFINVVKSGPFSNHSPLLYNISRSVHTWHKMQQGLIKMYKVEVLNKFPVVQHFWFGTAFFPWTSYGNNHSLPIYQPAENNDDADFLTANNATTKMPPPLSTSTSRFIHRR</sequence>
<proteinExistence type="inferred from homology"/>
<gene>
    <name type="primary">RRD1</name>
    <name type="ordered locus">KLLA0A00462g</name>
</gene>
<keyword id="KW-0963">Cytoplasm</keyword>
<keyword id="KW-0413">Isomerase</keyword>
<keyword id="KW-0539">Nucleus</keyword>
<keyword id="KW-1185">Reference proteome</keyword>
<keyword id="KW-0697">Rotamase</keyword>
<reference key="1">
    <citation type="journal article" date="2004" name="Nature">
        <title>Genome evolution in yeasts.</title>
        <authorList>
            <person name="Dujon B."/>
            <person name="Sherman D."/>
            <person name="Fischer G."/>
            <person name="Durrens P."/>
            <person name="Casaregola S."/>
            <person name="Lafontaine I."/>
            <person name="de Montigny J."/>
            <person name="Marck C."/>
            <person name="Neuveglise C."/>
            <person name="Talla E."/>
            <person name="Goffard N."/>
            <person name="Frangeul L."/>
            <person name="Aigle M."/>
            <person name="Anthouard V."/>
            <person name="Babour A."/>
            <person name="Barbe V."/>
            <person name="Barnay S."/>
            <person name="Blanchin S."/>
            <person name="Beckerich J.-M."/>
            <person name="Beyne E."/>
            <person name="Bleykasten C."/>
            <person name="Boisrame A."/>
            <person name="Boyer J."/>
            <person name="Cattolico L."/>
            <person name="Confanioleri F."/>
            <person name="de Daruvar A."/>
            <person name="Despons L."/>
            <person name="Fabre E."/>
            <person name="Fairhead C."/>
            <person name="Ferry-Dumazet H."/>
            <person name="Groppi A."/>
            <person name="Hantraye F."/>
            <person name="Hennequin C."/>
            <person name="Jauniaux N."/>
            <person name="Joyet P."/>
            <person name="Kachouri R."/>
            <person name="Kerrest A."/>
            <person name="Koszul R."/>
            <person name="Lemaire M."/>
            <person name="Lesur I."/>
            <person name="Ma L."/>
            <person name="Muller H."/>
            <person name="Nicaud J.-M."/>
            <person name="Nikolski M."/>
            <person name="Oztas S."/>
            <person name="Ozier-Kalogeropoulos O."/>
            <person name="Pellenz S."/>
            <person name="Potier S."/>
            <person name="Richard G.-F."/>
            <person name="Straub M.-L."/>
            <person name="Suleau A."/>
            <person name="Swennen D."/>
            <person name="Tekaia F."/>
            <person name="Wesolowski-Louvel M."/>
            <person name="Westhof E."/>
            <person name="Wirth B."/>
            <person name="Zeniou-Meyer M."/>
            <person name="Zivanovic Y."/>
            <person name="Bolotin-Fukuhara M."/>
            <person name="Thierry A."/>
            <person name="Bouchier C."/>
            <person name="Caudron B."/>
            <person name="Scarpelli C."/>
            <person name="Gaillardin C."/>
            <person name="Weissenbach J."/>
            <person name="Wincker P."/>
            <person name="Souciet J.-L."/>
        </authorList>
    </citation>
    <scope>NUCLEOTIDE SEQUENCE [LARGE SCALE GENOMIC DNA]</scope>
    <source>
        <strain>ATCC 8585 / CBS 2359 / DSM 70799 / NBRC 1267 / NRRL Y-1140 / WM37</strain>
    </source>
</reference>
<feature type="chain" id="PRO_0000226101" description="Serine/threonine-protein phosphatase 2A activator 1">
    <location>
        <begin position="1"/>
        <end position="353"/>
    </location>
</feature>
<feature type="region of interest" description="Disordered" evidence="2">
    <location>
        <begin position="331"/>
        <end position="353"/>
    </location>
</feature>
<feature type="compositionally biased region" description="Polar residues" evidence="2">
    <location>
        <begin position="343"/>
        <end position="353"/>
    </location>
</feature>